<feature type="chain" id="PRO_0000142661" description="Nucleoprotein">
    <location>
        <begin position="1"/>
        <end position="549"/>
    </location>
</feature>
<feature type="region of interest" description="Ncore" evidence="4">
    <location>
        <begin position="1"/>
        <end position="404"/>
    </location>
</feature>
<feature type="region of interest" description="P protein-binding" evidence="1">
    <location>
        <begin position="1"/>
        <end position="398"/>
    </location>
</feature>
<feature type="region of interest" description="Ntail" evidence="1">
    <location>
        <begin position="401"/>
        <end position="549"/>
    </location>
</feature>
<feature type="region of interest" description="Ntail" evidence="4">
    <location>
        <begin position="405"/>
        <end position="549"/>
    </location>
</feature>
<feature type="region of interest" description="Disordered" evidence="7">
    <location>
        <begin position="409"/>
        <end position="428"/>
    </location>
</feature>
<feature type="region of interest" description="Disordered" evidence="7">
    <location>
        <begin position="437"/>
        <end position="467"/>
    </location>
</feature>
<feature type="region of interest" description="Disordered" evidence="7">
    <location>
        <begin position="517"/>
        <end position="549"/>
    </location>
</feature>
<feature type="compositionally biased region" description="Low complexity" evidence="7">
    <location>
        <begin position="412"/>
        <end position="428"/>
    </location>
</feature>
<feature type="compositionally biased region" description="Acidic residues" evidence="7">
    <location>
        <begin position="437"/>
        <end position="447"/>
    </location>
</feature>
<feature type="compositionally biased region" description="Low complexity" evidence="7">
    <location>
        <begin position="452"/>
        <end position="465"/>
    </location>
</feature>
<feature type="compositionally biased region" description="Polar residues" evidence="7">
    <location>
        <begin position="531"/>
        <end position="549"/>
    </location>
</feature>
<feature type="binding site" evidence="3">
    <location>
        <position position="180"/>
    </location>
    <ligand>
        <name>RNA</name>
        <dbReference type="ChEBI" id="CHEBI:33697"/>
    </ligand>
</feature>
<feature type="binding site" evidence="3">
    <location>
        <position position="195"/>
    </location>
    <ligand>
        <name>RNA</name>
        <dbReference type="ChEBI" id="CHEBI:33697"/>
    </ligand>
</feature>
<feature type="binding site" evidence="3">
    <location>
        <position position="260"/>
    </location>
    <ligand>
        <name>RNA</name>
        <dbReference type="ChEBI" id="CHEBI:33697"/>
    </ligand>
</feature>
<feature type="binding site" evidence="3">
    <location>
        <position position="350"/>
    </location>
    <ligand>
        <name>RNA</name>
        <dbReference type="ChEBI" id="CHEBI:33697"/>
    </ligand>
</feature>
<feature type="binding site" evidence="3">
    <location>
        <position position="354"/>
    </location>
    <ligand>
        <name>RNA</name>
        <dbReference type="ChEBI" id="CHEBI:33697"/>
    </ligand>
</feature>
<feature type="modified residue" description="Phosphoserine" evidence="6">
    <location>
        <position position="439"/>
    </location>
</feature>
<accession>P21186</accession>
<accession>Q783W2</accession>
<protein>
    <recommendedName>
        <fullName>Nucleoprotein</fullName>
    </recommendedName>
    <alternativeName>
        <fullName>Nucleocapsid protein</fullName>
        <shortName>NP</shortName>
        <shortName>Protein N</shortName>
    </alternativeName>
</protein>
<sequence length="549" mass="61366">MSSVLKAFERFTIEQELQDRGEEGSIPPETLKSAVKVFVINTPNPTTRYHMLNFCLRIICSQNARASHRVGALITLFSLPSAGMQNHIRLADRSPEAQIERCEIDGFEPGTYRLIPNARANLTANEIAAYALLADDLPPTINNGTPYVHADVEGQPCDEIEQFLDRCYSVLIQAWVMVCKCMTAYDQPAGSADRRFAKYQQQGRLEARYMLQPEAQRLIQTAIRKSLVVRQYLTFELQLARRQGLLSNRYYAMVGDIGKYIENSGLTAFFLTLKYALGTKWSPLSLAAFTGELTKLRSLMMLYRDLGEQARYLALLEAPQIMDFAPGGYPLIFSYAMGVGTVLDVQMRNYTYARPFLNGYYFQIGVETARRQQGTVDNRVADDLGLTPEQRTEVTQLIDRLARGRGAGIPGGPVNPFVPPVQQQQPAAAYEDIPALEESDDDGDEDGGAGFQNGAQAPAARQGGQNDFRVQPLQDPIQAQLFMPLYPQVSNIPNHQNHQINRIGGMEHQDLLRYNENGDSQQDARGEHGNTFPNNPNQNAQSQVGDWDE</sequence>
<evidence type="ECO:0000250" key="1"/>
<evidence type="ECO:0000250" key="2">
    <source>
        <dbReference type="UniProtKB" id="D5LWW7"/>
    </source>
</evidence>
<evidence type="ECO:0000250" key="3">
    <source>
        <dbReference type="UniProtKB" id="O57286"/>
    </source>
</evidence>
<evidence type="ECO:0000250" key="4">
    <source>
        <dbReference type="UniProtKB" id="P06159"/>
    </source>
</evidence>
<evidence type="ECO:0000250" key="5">
    <source>
        <dbReference type="UniProtKB" id="Q77IS8"/>
    </source>
</evidence>
<evidence type="ECO:0000250" key="6">
    <source>
        <dbReference type="UniProtKB" id="Q9DQA5"/>
    </source>
</evidence>
<evidence type="ECO:0000256" key="7">
    <source>
        <dbReference type="SAM" id="MobiDB-lite"/>
    </source>
</evidence>
<evidence type="ECO:0000305" key="8"/>
<reference key="1">
    <citation type="journal article" date="1990" name="Virology">
        <title>Nucleotide sequence of the leader and nucleocapsid protein gene of mumps virus and epitope mapping with the in vitro expressed nucleocapsid protein.</title>
        <authorList>
            <person name="Tanabayashi K."/>
            <person name="Takeuchi K."/>
            <person name="Hishiyama M."/>
            <person name="Yamada A."/>
            <person name="Tsurudome M."/>
            <person name="Ito Y."/>
            <person name="Sugiura A."/>
        </authorList>
    </citation>
    <scope>NUCLEOTIDE SEQUENCE [GENOMIC RNA]</scope>
</reference>
<reference key="2">
    <citation type="journal article" date="1992" name="Virology">
        <title>Molecular cloning and sequence analysis of the mumps virus gene encoding the L protein and the trailer sequence.</title>
        <authorList>
            <person name="Okazaki K."/>
            <person name="Tanabayashi K."/>
            <person name="Takeuchi K."/>
            <person name="Hishiyama M."/>
            <person name="Okazaki K."/>
            <person name="Yamada A."/>
        </authorList>
    </citation>
    <scope>NUCLEOTIDE SEQUENCE [GENOMIC RNA]</scope>
</reference>
<keyword id="KW-0167">Capsid protein</keyword>
<keyword id="KW-1139">Helical capsid protein</keyword>
<keyword id="KW-1035">Host cytoplasm</keyword>
<keyword id="KW-0597">Phosphoprotein</keyword>
<keyword id="KW-1185">Reference proteome</keyword>
<keyword id="KW-0687">Ribonucleoprotein</keyword>
<keyword id="KW-0694">RNA-binding</keyword>
<keyword id="KW-0543">Viral nucleoprotein</keyword>
<keyword id="KW-0946">Virion</keyword>
<proteinExistence type="inferred from homology"/>
<organism>
    <name type="scientific">Mumps virus genotype B (strain Miyahara vaccine)</name>
    <name type="common">MuV</name>
    <dbReference type="NCBI Taxonomy" id="11171"/>
    <lineage>
        <taxon>Viruses</taxon>
        <taxon>Riboviria</taxon>
        <taxon>Orthornavirae</taxon>
        <taxon>Negarnaviricota</taxon>
        <taxon>Haploviricotina</taxon>
        <taxon>Monjiviricetes</taxon>
        <taxon>Mononegavirales</taxon>
        <taxon>Paramyxoviridae</taxon>
        <taxon>Rubulavirinae</taxon>
        <taxon>Orthorubulavirus</taxon>
        <taxon>Orthorubulavirus parotitidis</taxon>
        <taxon>Mumps orthorubulavirus</taxon>
    </lineage>
</organism>
<comment type="function">
    <text evidence="2 4">Forms the helical nucleocapsid (NC) with 12.71 N subunits per helical turn and a rise of 5.3 Angstrom per N subunit, protecting the genome from nucleases (By similarity). The encapsidated genomic RNA serves as template for transcription and replication; encapsidation by N is coupled to RNA synthesis (By similarity). Forms the encapsidation complex with the phosphoprotein protein P (By similarity). Before encapsidation, the newly synthesized free N protein, so-called N0, is chaperoned by P (By similarity).</text>
</comment>
<comment type="subunit">
    <text evidence="2 4 6">Homomultimer; forms the nucleocapsid (By similarity). Binds to the viral genomic RNA (By similarity). N0 interacts with the phosphoprotein (via N-terminus); this interaction allows P to chaperon N0 to avoid N polymerization before encapsidation (By similarity). Interacts (via N-terminus) as N-RNA template with the phosphoprotein (via C-terminus); this interaction positions the polymerase on the template (By similarity).</text>
</comment>
<comment type="subcellular location">
    <subcellularLocation>
        <location evidence="5">Virion</location>
    </subcellularLocation>
    <subcellularLocation>
        <location evidence="2">Host cytoplasm</location>
    </subcellularLocation>
    <text evidence="2">Found in cytoplasmic viral factories.</text>
</comment>
<comment type="domain">
    <text evidence="4">Ncore is globular and carries the regions required for self-assembly and RNA-binding. Ntail is an intrinsically disordered monomeric domain in the C-terminus.</text>
</comment>
<comment type="similarity">
    <text evidence="8">Belongs to the paramyxoviruses nucleocapsid family.</text>
</comment>
<name>NCAP_MUMPM</name>
<gene>
    <name type="primary">N</name>
    <name type="synonym">NP</name>
</gene>
<organismHost>
    <name type="scientific">Homo sapiens</name>
    <name type="common">Human</name>
    <dbReference type="NCBI Taxonomy" id="9606"/>
</organismHost>
<dbReference type="EMBL" id="M37750">
    <property type="protein sequence ID" value="AAA46619.1"/>
    <property type="molecule type" value="Genomic_RNA"/>
</dbReference>
<dbReference type="EMBL" id="AB040874">
    <property type="protein sequence ID" value="BAA94384.1"/>
    <property type="molecule type" value="Genomic_RNA"/>
</dbReference>
<dbReference type="PIR" id="A35314">
    <property type="entry name" value="VHNZMY"/>
</dbReference>
<dbReference type="SMR" id="P21186"/>
<dbReference type="IntAct" id="P21186">
    <property type="interactions" value="2"/>
</dbReference>
<dbReference type="KEGG" id="vg:1489766"/>
<dbReference type="Proteomes" id="UP000002331">
    <property type="component" value="Segment"/>
</dbReference>
<dbReference type="GO" id="GO:0019029">
    <property type="term" value="C:helical viral capsid"/>
    <property type="evidence" value="ECO:0007669"/>
    <property type="project" value="UniProtKB-KW"/>
</dbReference>
<dbReference type="GO" id="GO:0030430">
    <property type="term" value="C:host cell cytoplasm"/>
    <property type="evidence" value="ECO:0007669"/>
    <property type="project" value="UniProtKB-SubCell"/>
</dbReference>
<dbReference type="GO" id="GO:1990904">
    <property type="term" value="C:ribonucleoprotein complex"/>
    <property type="evidence" value="ECO:0007669"/>
    <property type="project" value="UniProtKB-KW"/>
</dbReference>
<dbReference type="GO" id="GO:0019013">
    <property type="term" value="C:viral nucleocapsid"/>
    <property type="evidence" value="ECO:0007669"/>
    <property type="project" value="UniProtKB-KW"/>
</dbReference>
<dbReference type="GO" id="GO:0003723">
    <property type="term" value="F:RNA binding"/>
    <property type="evidence" value="ECO:0007669"/>
    <property type="project" value="UniProtKB-KW"/>
</dbReference>
<dbReference type="GO" id="GO:0005198">
    <property type="term" value="F:structural molecule activity"/>
    <property type="evidence" value="ECO:0007669"/>
    <property type="project" value="InterPro"/>
</dbReference>
<dbReference type="InterPro" id="IPR002021">
    <property type="entry name" value="Paramyx_ncap"/>
</dbReference>
<dbReference type="Pfam" id="PF00973">
    <property type="entry name" value="Paramyxo_ncap"/>
    <property type="match status" value="1"/>
</dbReference>